<dbReference type="EMBL" id="CP001127">
    <property type="protein sequence ID" value="ACF91627.1"/>
    <property type="status" value="ALT_INIT"/>
    <property type="molecule type" value="Genomic_DNA"/>
</dbReference>
<dbReference type="SMR" id="B4TXY3"/>
<dbReference type="KEGG" id="sew:SeSA_A1955"/>
<dbReference type="HOGENOM" id="CLU_1873951_0_0_6"/>
<dbReference type="Proteomes" id="UP000001865">
    <property type="component" value="Chromosome"/>
</dbReference>
<dbReference type="Gene3D" id="3.10.510.20">
    <property type="entry name" value="YcgL domain"/>
    <property type="match status" value="1"/>
</dbReference>
<dbReference type="HAMAP" id="MF_01866">
    <property type="entry name" value="UPF0745"/>
    <property type="match status" value="1"/>
</dbReference>
<dbReference type="InterPro" id="IPR038068">
    <property type="entry name" value="YcgL-like_sf"/>
</dbReference>
<dbReference type="InterPro" id="IPR027354">
    <property type="entry name" value="YcgL_dom"/>
</dbReference>
<dbReference type="PANTHER" id="PTHR38109">
    <property type="entry name" value="PROTEIN YCGL"/>
    <property type="match status" value="1"/>
</dbReference>
<dbReference type="PANTHER" id="PTHR38109:SF1">
    <property type="entry name" value="PROTEIN YCGL"/>
    <property type="match status" value="1"/>
</dbReference>
<dbReference type="Pfam" id="PF05166">
    <property type="entry name" value="YcgL"/>
    <property type="match status" value="1"/>
</dbReference>
<dbReference type="SUPFAM" id="SSF160191">
    <property type="entry name" value="YcgL-like"/>
    <property type="match status" value="1"/>
</dbReference>
<dbReference type="PROSITE" id="PS51648">
    <property type="entry name" value="YCGL"/>
    <property type="match status" value="1"/>
</dbReference>
<comment type="sequence caution" evidence="3">
    <conflict type="erroneous initiation">
        <sequence resource="EMBL-CDS" id="ACF91627"/>
    </conflict>
</comment>
<sequence>MRQVTIPLIQSKSMFCVIYRSSKRDQTYLYVEKKDDFSRVPEALMKGFGQPQLAMMLPLDGRKKLVNAELEKVKQALSEQGYYLQLPPPPEDLLKQHLSSVGQNTSHADR</sequence>
<protein>
    <recommendedName>
        <fullName evidence="1">Protein YcgL</fullName>
    </recommendedName>
</protein>
<organism>
    <name type="scientific">Salmonella schwarzengrund (strain CVM19633)</name>
    <dbReference type="NCBI Taxonomy" id="439843"/>
    <lineage>
        <taxon>Bacteria</taxon>
        <taxon>Pseudomonadati</taxon>
        <taxon>Pseudomonadota</taxon>
        <taxon>Gammaproteobacteria</taxon>
        <taxon>Enterobacterales</taxon>
        <taxon>Enterobacteriaceae</taxon>
        <taxon>Salmonella</taxon>
    </lineage>
</organism>
<evidence type="ECO:0000255" key="1">
    <source>
        <dbReference type="HAMAP-Rule" id="MF_01866"/>
    </source>
</evidence>
<evidence type="ECO:0000256" key="2">
    <source>
        <dbReference type="SAM" id="MobiDB-lite"/>
    </source>
</evidence>
<evidence type="ECO:0000305" key="3"/>
<reference key="1">
    <citation type="journal article" date="2011" name="J. Bacteriol.">
        <title>Comparative genomics of 28 Salmonella enterica isolates: evidence for CRISPR-mediated adaptive sublineage evolution.</title>
        <authorList>
            <person name="Fricke W.F."/>
            <person name="Mammel M.K."/>
            <person name="McDermott P.F."/>
            <person name="Tartera C."/>
            <person name="White D.G."/>
            <person name="Leclerc J.E."/>
            <person name="Ravel J."/>
            <person name="Cebula T.A."/>
        </authorList>
    </citation>
    <scope>NUCLEOTIDE SEQUENCE [LARGE SCALE GENOMIC DNA]</scope>
    <source>
        <strain>CVM19633</strain>
    </source>
</reference>
<accession>B4TXY3</accession>
<proteinExistence type="inferred from homology"/>
<gene>
    <name evidence="1" type="primary">ycgL</name>
    <name type="ordered locus">SeSA_A1955</name>
</gene>
<name>YCGL_SALSV</name>
<feature type="chain" id="PRO_0000375359" description="Protein YcgL">
    <location>
        <begin position="1"/>
        <end position="110"/>
    </location>
</feature>
<feature type="domain" description="YcgL" evidence="1">
    <location>
        <begin position="14"/>
        <end position="98"/>
    </location>
</feature>
<feature type="region of interest" description="Disordered" evidence="2">
    <location>
        <begin position="88"/>
        <end position="110"/>
    </location>
</feature>
<feature type="compositionally biased region" description="Polar residues" evidence="2">
    <location>
        <begin position="97"/>
        <end position="110"/>
    </location>
</feature>